<name>EF1G_HUMAN</name>
<reference key="1">
    <citation type="journal article" date="1992" name="Nucleic Acids Res.">
        <title>Elongation factor-1 messenger-RNA levels in cultured cells are high compared to tissue and are not drastically affected further by oncogenic transformation.</title>
        <authorList>
            <person name="Sanders J."/>
            <person name="Maassen J.A."/>
            <person name="Moeller W."/>
        </authorList>
    </citation>
    <scope>NUCLEOTIDE SEQUENCE [MRNA] (ISOFORM 1)</scope>
</reference>
<reference key="2">
    <citation type="journal article" date="1992" name="Nucleic Acids Res.">
        <title>Human cDNAs encoding elongation factor 1 gamma and the ribosomal protein L19.</title>
        <authorList>
            <person name="Kumabe T."/>
            <person name="Schma Y."/>
            <person name="Yamamoto T."/>
        </authorList>
    </citation>
    <scope>NUCLEOTIDE SEQUENCE [MRNA] (ISOFORM 1)</scope>
</reference>
<reference key="3">
    <citation type="journal article" date="2004" name="Nat. Genet.">
        <title>Complete sequencing and characterization of 21,243 full-length human cDNAs.</title>
        <authorList>
            <person name="Ota T."/>
            <person name="Suzuki Y."/>
            <person name="Nishikawa T."/>
            <person name="Otsuki T."/>
            <person name="Sugiyama T."/>
            <person name="Irie R."/>
            <person name="Wakamatsu A."/>
            <person name="Hayashi K."/>
            <person name="Sato H."/>
            <person name="Nagai K."/>
            <person name="Kimura K."/>
            <person name="Makita H."/>
            <person name="Sekine M."/>
            <person name="Obayashi M."/>
            <person name="Nishi T."/>
            <person name="Shibahara T."/>
            <person name="Tanaka T."/>
            <person name="Ishii S."/>
            <person name="Yamamoto J."/>
            <person name="Saito K."/>
            <person name="Kawai Y."/>
            <person name="Isono Y."/>
            <person name="Nakamura Y."/>
            <person name="Nagahari K."/>
            <person name="Murakami K."/>
            <person name="Yasuda T."/>
            <person name="Iwayanagi T."/>
            <person name="Wagatsuma M."/>
            <person name="Shiratori A."/>
            <person name="Sudo H."/>
            <person name="Hosoiri T."/>
            <person name="Kaku Y."/>
            <person name="Kodaira H."/>
            <person name="Kondo H."/>
            <person name="Sugawara M."/>
            <person name="Takahashi M."/>
            <person name="Kanda K."/>
            <person name="Yokoi T."/>
            <person name="Furuya T."/>
            <person name="Kikkawa E."/>
            <person name="Omura Y."/>
            <person name="Abe K."/>
            <person name="Kamihara K."/>
            <person name="Katsuta N."/>
            <person name="Sato K."/>
            <person name="Tanikawa M."/>
            <person name="Yamazaki M."/>
            <person name="Ninomiya K."/>
            <person name="Ishibashi T."/>
            <person name="Yamashita H."/>
            <person name="Murakawa K."/>
            <person name="Fujimori K."/>
            <person name="Tanai H."/>
            <person name="Kimata M."/>
            <person name="Watanabe M."/>
            <person name="Hiraoka S."/>
            <person name="Chiba Y."/>
            <person name="Ishida S."/>
            <person name="Ono Y."/>
            <person name="Takiguchi S."/>
            <person name="Watanabe S."/>
            <person name="Yosida M."/>
            <person name="Hotuta T."/>
            <person name="Kusano J."/>
            <person name="Kanehori K."/>
            <person name="Takahashi-Fujii A."/>
            <person name="Hara H."/>
            <person name="Tanase T.-O."/>
            <person name="Nomura Y."/>
            <person name="Togiya S."/>
            <person name="Komai F."/>
            <person name="Hara R."/>
            <person name="Takeuchi K."/>
            <person name="Arita M."/>
            <person name="Imose N."/>
            <person name="Musashino K."/>
            <person name="Yuuki H."/>
            <person name="Oshima A."/>
            <person name="Sasaki N."/>
            <person name="Aotsuka S."/>
            <person name="Yoshikawa Y."/>
            <person name="Matsunawa H."/>
            <person name="Ichihara T."/>
            <person name="Shiohata N."/>
            <person name="Sano S."/>
            <person name="Moriya S."/>
            <person name="Momiyama H."/>
            <person name="Satoh N."/>
            <person name="Takami S."/>
            <person name="Terashima Y."/>
            <person name="Suzuki O."/>
            <person name="Nakagawa S."/>
            <person name="Senoh A."/>
            <person name="Mizoguchi H."/>
            <person name="Goto Y."/>
            <person name="Shimizu F."/>
            <person name="Wakebe H."/>
            <person name="Hishigaki H."/>
            <person name="Watanabe T."/>
            <person name="Sugiyama A."/>
            <person name="Takemoto M."/>
            <person name="Kawakami B."/>
            <person name="Yamazaki M."/>
            <person name="Watanabe K."/>
            <person name="Kumagai A."/>
            <person name="Itakura S."/>
            <person name="Fukuzumi Y."/>
            <person name="Fujimori Y."/>
            <person name="Komiyama M."/>
            <person name="Tashiro H."/>
            <person name="Tanigami A."/>
            <person name="Fujiwara T."/>
            <person name="Ono T."/>
            <person name="Yamada K."/>
            <person name="Fujii Y."/>
            <person name="Ozaki K."/>
            <person name="Hirao M."/>
            <person name="Ohmori Y."/>
            <person name="Kawabata A."/>
            <person name="Hikiji T."/>
            <person name="Kobatake N."/>
            <person name="Inagaki H."/>
            <person name="Ikema Y."/>
            <person name="Okamoto S."/>
            <person name="Okitani R."/>
            <person name="Kawakami T."/>
            <person name="Noguchi S."/>
            <person name="Itoh T."/>
            <person name="Shigeta K."/>
            <person name="Senba T."/>
            <person name="Matsumura K."/>
            <person name="Nakajima Y."/>
            <person name="Mizuno T."/>
            <person name="Morinaga M."/>
            <person name="Sasaki M."/>
            <person name="Togashi T."/>
            <person name="Oyama M."/>
            <person name="Hata H."/>
            <person name="Watanabe M."/>
            <person name="Komatsu T."/>
            <person name="Mizushima-Sugano J."/>
            <person name="Satoh T."/>
            <person name="Shirai Y."/>
            <person name="Takahashi Y."/>
            <person name="Nakagawa K."/>
            <person name="Okumura K."/>
            <person name="Nagase T."/>
            <person name="Nomura N."/>
            <person name="Kikuchi H."/>
            <person name="Masuho Y."/>
            <person name="Yamashita R."/>
            <person name="Nakai K."/>
            <person name="Yada T."/>
            <person name="Nakamura Y."/>
            <person name="Ohara O."/>
            <person name="Isogai T."/>
            <person name="Sugano S."/>
        </authorList>
    </citation>
    <scope>NUCLEOTIDE SEQUENCE [LARGE SCALE MRNA] (ISOFORM 2)</scope>
    <source>
        <tissue>Placenta</tissue>
    </source>
</reference>
<reference key="4">
    <citation type="journal article" date="2006" name="Nature">
        <title>Human chromosome 11 DNA sequence and analysis including novel gene identification.</title>
        <authorList>
            <person name="Taylor T.D."/>
            <person name="Noguchi H."/>
            <person name="Totoki Y."/>
            <person name="Toyoda A."/>
            <person name="Kuroki Y."/>
            <person name="Dewar K."/>
            <person name="Lloyd C."/>
            <person name="Itoh T."/>
            <person name="Takeda T."/>
            <person name="Kim D.-W."/>
            <person name="She X."/>
            <person name="Barlow K.F."/>
            <person name="Bloom T."/>
            <person name="Bruford E."/>
            <person name="Chang J.L."/>
            <person name="Cuomo C.A."/>
            <person name="Eichler E."/>
            <person name="FitzGerald M.G."/>
            <person name="Jaffe D.B."/>
            <person name="LaButti K."/>
            <person name="Nicol R."/>
            <person name="Park H.-S."/>
            <person name="Seaman C."/>
            <person name="Sougnez C."/>
            <person name="Yang X."/>
            <person name="Zimmer A.R."/>
            <person name="Zody M.C."/>
            <person name="Birren B.W."/>
            <person name="Nusbaum C."/>
            <person name="Fujiyama A."/>
            <person name="Hattori M."/>
            <person name="Rogers J."/>
            <person name="Lander E.S."/>
            <person name="Sakaki Y."/>
        </authorList>
    </citation>
    <scope>NUCLEOTIDE SEQUENCE [LARGE SCALE GENOMIC DNA]</scope>
</reference>
<reference key="5">
    <citation type="journal article" date="2004" name="Genome Res.">
        <title>The status, quality, and expansion of the NIH full-length cDNA project: the Mammalian Gene Collection (MGC).</title>
        <authorList>
            <consortium name="The MGC Project Team"/>
        </authorList>
    </citation>
    <scope>NUCLEOTIDE SEQUENCE [LARGE SCALE MRNA] (ISOFORM 1)</scope>
    <source>
        <tissue>Bone marrow</tissue>
        <tissue>Eye</tissue>
        <tissue>Liver</tissue>
        <tissue>Lung</tissue>
        <tissue>Muscle</tissue>
        <tissue>Testis</tissue>
        <tissue>Uterus</tissue>
    </source>
</reference>
<reference key="6">
    <citation type="journal article" date="2003" name="Nat. Biotechnol.">
        <title>Exploring proteomes and analyzing protein processing by mass spectrometric identification of sorted N-terminal peptides.</title>
        <authorList>
            <person name="Gevaert K."/>
            <person name="Goethals M."/>
            <person name="Martens L."/>
            <person name="Van Damme J."/>
            <person name="Staes A."/>
            <person name="Thomas G.R."/>
            <person name="Vandekerckhove J."/>
        </authorList>
    </citation>
    <scope>PROTEIN SEQUENCE OF 2-14</scope>
    <source>
        <tissue>Platelet</tissue>
    </source>
</reference>
<reference key="7">
    <citation type="submission" date="2004-10" db="UniProtKB">
        <authorList>
            <person name="Bienvenut W.V."/>
        </authorList>
    </citation>
    <scope>PROTEIN SEQUENCE OF 2-14</scope>
    <scope>CLEAVAGE OF INITIATOR METHIONINE</scope>
    <scope>ACETYLATION AT ALA-2</scope>
    <scope>IDENTIFICATION BY MASS SPECTROMETRY</scope>
    <source>
        <tissue>B-cell lymphoma</tissue>
    </source>
</reference>
<reference key="8">
    <citation type="journal article" date="1992" name="Pancreas">
        <title>Expression of elongation factor-1 gamma-related sequence in human pancreatic cancer.</title>
        <authorList>
            <person name="Lew Y."/>
            <person name="Jones D.V."/>
            <person name="Mars W.M."/>
            <person name="Evans D."/>
            <person name="Byrd D."/>
            <person name="Frazier M.L."/>
        </authorList>
    </citation>
    <scope>NUCLEOTIDE SEQUENCE [MRNA] OF 80-437 (ISOFORM 1)</scope>
    <source>
        <tissue>Pancreatic carcinoma</tissue>
    </source>
</reference>
<reference key="9">
    <citation type="submission" date="1999-01" db="EMBL/GenBank/DDBJ databases">
        <title>Functional prediction of the coding sequences of 79 new genes deduced by analysis of cDNA clones from human fetal liver.</title>
        <authorList>
            <person name="Zhang C."/>
            <person name="Yu Y."/>
            <person name="Zhang S."/>
            <person name="Wei H."/>
            <person name="Zhang Y."/>
            <person name="Zhou G."/>
            <person name="Bi J."/>
            <person name="Liu M."/>
            <person name="He F."/>
        </authorList>
    </citation>
    <scope>NUCLEOTIDE SEQUENCE [LARGE SCALE MRNA] OF 121-437 (ISOFORM 1)</scope>
    <source>
        <tissue>Fetal liver</tissue>
    </source>
</reference>
<reference key="10">
    <citation type="journal article" date="2003" name="Nature">
        <title>Proteomic characterization of the human centrosome by protein correlation profiling.</title>
        <authorList>
            <person name="Andersen J.S."/>
            <person name="Wilkinson C.J."/>
            <person name="Mayor T."/>
            <person name="Mortensen P."/>
            <person name="Nigg E.A."/>
            <person name="Mann M."/>
        </authorList>
    </citation>
    <scope>IDENTIFICATION BY MASS SPECTROMETRY</scope>
    <source>
        <tissue>Lymphoblast</tissue>
    </source>
</reference>
<reference key="11">
    <citation type="journal article" date="2006" name="Cell. Microbiol.">
        <title>Transcriptomic and proteomic analyses of rhabdomyosarcoma cells reveal differential cellular gene expression in response to enterovirus 71 infection.</title>
        <authorList>
            <person name="Leong W.F."/>
            <person name="Chow V.T."/>
        </authorList>
    </citation>
    <scope>INDUCTION</scope>
    <scope>IDENTIFICATION BY MASS SPECTROMETRY</scope>
</reference>
<reference key="12">
    <citation type="journal article" date="2009" name="Anal. Chem.">
        <title>Lys-N and trypsin cover complementary parts of the phosphoproteome in a refined SCX-based approach.</title>
        <authorList>
            <person name="Gauci S."/>
            <person name="Helbig A.O."/>
            <person name="Slijper M."/>
            <person name="Krijgsveld J."/>
            <person name="Heck A.J."/>
            <person name="Mohammed S."/>
        </authorList>
    </citation>
    <scope>ACETYLATION [LARGE SCALE ANALYSIS] AT ALA-2</scope>
    <scope>CLEAVAGE OF INITIATOR METHIONINE [LARGE SCALE ANALYSIS]</scope>
    <scope>IDENTIFICATION BY MASS SPECTROMETRY [LARGE SCALE ANALYSIS]</scope>
</reference>
<reference key="13">
    <citation type="journal article" date="2009" name="Science">
        <title>Lysine acetylation targets protein complexes and co-regulates major cellular functions.</title>
        <authorList>
            <person name="Choudhary C."/>
            <person name="Kumar C."/>
            <person name="Gnad F."/>
            <person name="Nielsen M.L."/>
            <person name="Rehman M."/>
            <person name="Walther T.C."/>
            <person name="Olsen J.V."/>
            <person name="Mann M."/>
        </authorList>
    </citation>
    <scope>ACETYLATION [LARGE SCALE ANALYSIS] AT LYS-147 AND LYS-434</scope>
    <scope>IDENTIFICATION BY MASS SPECTROMETRY [LARGE SCALE ANALYSIS]</scope>
</reference>
<reference key="14">
    <citation type="journal article" date="2011" name="BMC Syst. Biol.">
        <title>Initial characterization of the human central proteome.</title>
        <authorList>
            <person name="Burkard T.R."/>
            <person name="Planyavsky M."/>
            <person name="Kaupe I."/>
            <person name="Breitwieser F.P."/>
            <person name="Buerckstuemmer T."/>
            <person name="Bennett K.L."/>
            <person name="Superti-Furga G."/>
            <person name="Colinge J."/>
        </authorList>
    </citation>
    <scope>IDENTIFICATION BY MASS SPECTROMETRY [LARGE SCALE ANALYSIS]</scope>
</reference>
<reference key="15">
    <citation type="journal article" date="2011" name="Mol. Cell. Proteomics">
        <title>The first identification of lysine malonylation substrates and its regulatory enzyme.</title>
        <authorList>
            <person name="Peng C."/>
            <person name="Lu Z."/>
            <person name="Xie Z."/>
            <person name="Cheng Z."/>
            <person name="Chen Y."/>
            <person name="Tan M."/>
            <person name="Luo H."/>
            <person name="Zhang Y."/>
            <person name="He W."/>
            <person name="Yang K."/>
            <person name="Zwaans B.M."/>
            <person name="Tishkoff D."/>
            <person name="Ho L."/>
            <person name="Lombard D."/>
            <person name="He T.C."/>
            <person name="Dai J."/>
            <person name="Verdin E."/>
            <person name="Ye Y."/>
            <person name="Zhao Y."/>
        </authorList>
    </citation>
    <scope>MALONYLATION AT LYS-434</scope>
</reference>
<reference key="16">
    <citation type="journal article" date="2012" name="Mol. Cell. Proteomics">
        <title>Comparative large-scale characterisation of plant vs. mammal proteins reveals similar and idiosyncratic N-alpha acetylation features.</title>
        <authorList>
            <person name="Bienvenut W.V."/>
            <person name="Sumpton D."/>
            <person name="Martinez A."/>
            <person name="Lilla S."/>
            <person name="Espagne C."/>
            <person name="Meinnel T."/>
            <person name="Giglione C."/>
        </authorList>
    </citation>
    <scope>ACETYLATION [LARGE SCALE ANALYSIS] AT ALA-2</scope>
    <scope>CLEAVAGE OF INITIATOR METHIONINE [LARGE SCALE ANALYSIS]</scope>
    <scope>IDENTIFICATION BY MASS SPECTROMETRY [LARGE SCALE ANALYSIS]</scope>
</reference>
<reference key="17">
    <citation type="journal article" date="2012" name="Proc. Natl. Acad. Sci. U.S.A.">
        <title>N-terminal acetylome analyses and functional insights of the N-terminal acetyltransferase NatB.</title>
        <authorList>
            <person name="Van Damme P."/>
            <person name="Lasa M."/>
            <person name="Polevoda B."/>
            <person name="Gazquez C."/>
            <person name="Elosegui-Artola A."/>
            <person name="Kim D.S."/>
            <person name="De Juan-Pardo E."/>
            <person name="Demeyer K."/>
            <person name="Hole K."/>
            <person name="Larrea E."/>
            <person name="Timmerman E."/>
            <person name="Prieto J."/>
            <person name="Arnesen T."/>
            <person name="Sherman F."/>
            <person name="Gevaert K."/>
            <person name="Aldabe R."/>
        </authorList>
    </citation>
    <scope>ACETYLATION [LARGE SCALE ANALYSIS] AT ALA-2</scope>
    <scope>CLEAVAGE OF INITIATOR METHIONINE [LARGE SCALE ANALYSIS]</scope>
    <scope>IDENTIFICATION BY MASS SPECTROMETRY [LARGE SCALE ANALYSIS]</scope>
</reference>
<reference key="18">
    <citation type="journal article" date="2014" name="J. Proteomics">
        <title>An enzyme assisted RP-RPLC approach for in-depth analysis of human liver phosphoproteome.</title>
        <authorList>
            <person name="Bian Y."/>
            <person name="Song C."/>
            <person name="Cheng K."/>
            <person name="Dong M."/>
            <person name="Wang F."/>
            <person name="Huang J."/>
            <person name="Sun D."/>
            <person name="Wang L."/>
            <person name="Ye M."/>
            <person name="Zou H."/>
        </authorList>
    </citation>
    <scope>IDENTIFICATION BY MASS SPECTROMETRY [LARGE SCALE ANALYSIS]</scope>
    <source>
        <tissue>Liver</tissue>
    </source>
</reference>
<reference key="19">
    <citation type="journal article" date="2014" name="Proc. Natl. Acad. Sci. U.S.A.">
        <title>Mapping of SUMO sites and analysis of SUMOylation changes induced by external stimuli.</title>
        <authorList>
            <person name="Impens F."/>
            <person name="Radoshevich L."/>
            <person name="Cossart P."/>
            <person name="Ribet D."/>
        </authorList>
    </citation>
    <scope>SUMOYLATION [LARGE SCALE ANALYSIS] AT LYS-253</scope>
    <scope>IDENTIFICATION BY MASS SPECTROMETRY [LARGE SCALE ANALYSIS]</scope>
</reference>
<reference key="20">
    <citation type="journal article" date="2015" name="Proteomics">
        <title>N-terminome analysis of the human mitochondrial proteome.</title>
        <authorList>
            <person name="Vaca Jacome A.S."/>
            <person name="Rabilloud T."/>
            <person name="Schaeffer-Reiss C."/>
            <person name="Rompais M."/>
            <person name="Ayoub D."/>
            <person name="Lane L."/>
            <person name="Bairoch A."/>
            <person name="Van Dorsselaer A."/>
            <person name="Carapito C."/>
        </authorList>
    </citation>
    <scope>IDENTIFICATION BY MASS SPECTROMETRY [LARGE SCALE ANALYSIS]</scope>
</reference>
<reference key="21">
    <citation type="journal article" date="2017" name="Nat. Struct. Mol. Biol.">
        <title>Site-specific mapping of the human SUMO proteome reveals co-modification with phosphorylation.</title>
        <authorList>
            <person name="Hendriks I.A."/>
            <person name="Lyon D."/>
            <person name="Young C."/>
            <person name="Jensen L.J."/>
            <person name="Vertegaal A.C."/>
            <person name="Nielsen M.L."/>
        </authorList>
    </citation>
    <scope>SUMOYLATION [LARGE SCALE ANALYSIS] AT LYS-285</scope>
    <scope>IDENTIFICATION BY MASS SPECTROMETRY [LARGE SCALE ANALYSIS]</scope>
</reference>
<reference key="22">
    <citation type="journal article" date="2003" name="J. Biomol. NMR">
        <title>1H, 15N and 13C resonance assignments of the highly conserved 19 kDa C-terminal domain from human elongation factor 1Bgamma.</title>
        <authorList>
            <person name="Vanwetswinkel S."/>
            <person name="Kriek J."/>
            <person name="Andersen G.R."/>
            <person name="Dijk J."/>
            <person name="Siegal G."/>
        </authorList>
    </citation>
    <scope>STRUCTURE BY NMR OF 276-437</scope>
</reference>
<keyword id="KW-0002">3D-structure</keyword>
<keyword id="KW-0007">Acetylation</keyword>
<keyword id="KW-0025">Alternative splicing</keyword>
<keyword id="KW-0903">Direct protein sequencing</keyword>
<keyword id="KW-0251">Elongation factor</keyword>
<keyword id="KW-1017">Isopeptide bond</keyword>
<keyword id="KW-0648">Protein biosynthesis</keyword>
<keyword id="KW-1267">Proteomics identification</keyword>
<keyword id="KW-1185">Reference proteome</keyword>
<keyword id="KW-0832">Ubl conjugation</keyword>
<feature type="initiator methionine" description="Removed" evidence="4 7 10 12 13">
    <location>
        <position position="1"/>
    </location>
</feature>
<feature type="chain" id="PRO_0000208813" description="Elongation factor 1-gamma">
    <location>
        <begin position="2"/>
        <end position="437"/>
    </location>
</feature>
<feature type="domain" description="GST N-terminal">
    <location>
        <begin position="2"/>
        <end position="87"/>
    </location>
</feature>
<feature type="domain" description="GST C-terminal">
    <location>
        <begin position="88"/>
        <end position="216"/>
    </location>
</feature>
<feature type="domain" description="EF-1-gamma C-terminal" evidence="2">
    <location>
        <begin position="276"/>
        <end position="437"/>
    </location>
</feature>
<feature type="region of interest" description="Disordered" evidence="3">
    <location>
        <begin position="221"/>
        <end position="268"/>
    </location>
</feature>
<feature type="compositionally biased region" description="Basic and acidic residues" evidence="3">
    <location>
        <begin position="221"/>
        <end position="254"/>
    </location>
</feature>
<feature type="modified residue" description="N-acetylalanine" evidence="7 10 12 13">
    <location>
        <position position="2"/>
    </location>
</feature>
<feature type="modified residue" description="N6-acetyllysine" evidence="11">
    <location>
        <position position="147"/>
    </location>
</feature>
<feature type="modified residue" description="N6-acetyllysine" evidence="1">
    <location>
        <position position="212"/>
    </location>
</feature>
<feature type="modified residue" description="N6-acetyllysine" evidence="1">
    <location>
        <position position="401"/>
    </location>
</feature>
<feature type="modified residue" description="N6-acetyllysine; alternate" evidence="11">
    <location>
        <position position="434"/>
    </location>
</feature>
<feature type="modified residue" description="N6-malonyllysine; alternate" evidence="6">
    <location>
        <position position="434"/>
    </location>
</feature>
<feature type="cross-link" description="Glycyl lysine isopeptide (Lys-Gly) (interchain with G-Cter in SUMO1)" evidence="14">
    <location>
        <position position="253"/>
    </location>
</feature>
<feature type="cross-link" description="Glycyl lysine isopeptide (Lys-Gly) (interchain with G-Cter in SUMO2)" evidence="15">
    <location>
        <position position="285"/>
    </location>
</feature>
<feature type="splice variant" id="VSP_056204" description="In isoform 2." evidence="8">
    <original>MAAG</original>
    <variation>MAERWVAPAVLRRARFASTFFLSPQIYAHKDGDLRSAFFILSFKRGEFIPFLNW</variation>
    <location>
        <begin position="1"/>
        <end position="4"/>
    </location>
</feature>
<feature type="sequence conflict" description="In Ref. 5; AAH13918." evidence="9" ref="5">
    <original>A</original>
    <variation>V</variation>
    <location>
        <position position="102"/>
    </location>
</feature>
<feature type="strand" evidence="17">
    <location>
        <begin position="3"/>
        <end position="7"/>
    </location>
</feature>
<feature type="helix" evidence="17">
    <location>
        <begin position="13"/>
        <end position="25"/>
    </location>
</feature>
<feature type="strand" evidence="17">
    <location>
        <begin position="28"/>
        <end position="32"/>
    </location>
</feature>
<feature type="turn" evidence="17">
    <location>
        <begin position="35"/>
        <end position="37"/>
    </location>
</feature>
<feature type="turn" evidence="17">
    <location>
        <begin position="40"/>
        <end position="42"/>
    </location>
</feature>
<feature type="helix" evidence="17">
    <location>
        <begin position="43"/>
        <end position="45"/>
    </location>
</feature>
<feature type="helix" evidence="17">
    <location>
        <begin position="47"/>
        <end position="52"/>
    </location>
</feature>
<feature type="strand" evidence="17">
    <location>
        <begin position="58"/>
        <end position="63"/>
    </location>
</feature>
<feature type="helix" evidence="17">
    <location>
        <begin position="72"/>
        <end position="78"/>
    </location>
</feature>
<feature type="helix" evidence="17">
    <location>
        <begin position="82"/>
        <end position="85"/>
    </location>
</feature>
<feature type="helix" evidence="17">
    <location>
        <begin position="89"/>
        <end position="105"/>
    </location>
</feature>
<feature type="helix" evidence="17">
    <location>
        <begin position="107"/>
        <end position="117"/>
    </location>
</feature>
<feature type="helix" evidence="17">
    <location>
        <begin position="125"/>
        <end position="145"/>
    </location>
</feature>
<feature type="turn" evidence="17">
    <location>
        <begin position="146"/>
        <end position="148"/>
    </location>
</feature>
<feature type="strand" evidence="17">
    <location>
        <begin position="150"/>
        <end position="153"/>
    </location>
</feature>
<feature type="helix" evidence="17">
    <location>
        <begin position="159"/>
        <end position="174"/>
    </location>
</feature>
<feature type="helix" evidence="17">
    <location>
        <begin position="178"/>
        <end position="181"/>
    </location>
</feature>
<feature type="helix" evidence="17">
    <location>
        <begin position="185"/>
        <end position="195"/>
    </location>
</feature>
<feature type="helix" evidence="17">
    <location>
        <begin position="198"/>
        <end position="204"/>
    </location>
</feature>
<feature type="helix" evidence="16">
    <location>
        <begin position="279"/>
        <end position="281"/>
    </location>
</feature>
<feature type="helix" evidence="16">
    <location>
        <begin position="290"/>
        <end position="299"/>
    </location>
</feature>
<feature type="helix" evidence="16">
    <location>
        <begin position="302"/>
        <end position="304"/>
    </location>
</feature>
<feature type="helix" evidence="16">
    <location>
        <begin position="306"/>
        <end position="311"/>
    </location>
</feature>
<feature type="turn" evidence="16">
    <location>
        <begin position="316"/>
        <end position="318"/>
    </location>
</feature>
<feature type="strand" evidence="16">
    <location>
        <begin position="320"/>
        <end position="324"/>
    </location>
</feature>
<feature type="helix" evidence="16">
    <location>
        <begin position="329"/>
        <end position="331"/>
    </location>
</feature>
<feature type="helix" evidence="16">
    <location>
        <begin position="338"/>
        <end position="348"/>
    </location>
</feature>
<feature type="helix" evidence="16">
    <location>
        <begin position="349"/>
        <end position="351"/>
    </location>
</feature>
<feature type="helix" evidence="16">
    <location>
        <begin position="353"/>
        <end position="355"/>
    </location>
</feature>
<feature type="strand" evidence="16">
    <location>
        <begin position="356"/>
        <end position="358"/>
    </location>
</feature>
<feature type="strand" evidence="16">
    <location>
        <begin position="361"/>
        <end position="364"/>
    </location>
</feature>
<feature type="strand" evidence="16">
    <location>
        <begin position="370"/>
        <end position="381"/>
    </location>
</feature>
<feature type="helix" evidence="16">
    <location>
        <begin position="384"/>
        <end position="386"/>
    </location>
</feature>
<feature type="helix" evidence="16">
    <location>
        <begin position="388"/>
        <end position="390"/>
    </location>
</feature>
<feature type="helix" evidence="16">
    <location>
        <begin position="394"/>
        <end position="396"/>
    </location>
</feature>
<feature type="helix" evidence="16">
    <location>
        <begin position="408"/>
        <end position="418"/>
    </location>
</feature>
<feature type="turn" evidence="16">
    <location>
        <begin position="424"/>
        <end position="426"/>
    </location>
</feature>
<sequence length="437" mass="50119">MAAGTLYTYPENWRAFKALIAAQYSGAQVRVLSAPPHFHFGQTNRTPEFLRKFPAGKVPAFEGDDGFCVFESNAIAYYVSNEELRGSTPEAAAQVVQWVSFADSDIVPPASTWVFPTLGIMHHNKQATENAKEEVRRILGLLDAYLKTRTFLVGERVTLADITVVCTLLWLYKQVLEPSFRQAFPNTNRWFLTCINQPQFRAVLGEVKLCEKMAQFDAKKFAETQPKKDTPRKEKGSREEKQKPQAERKEEKKAAAPAPEEEMDECEQALAAEPKAKDPFAHLPKSTFVLDEFKRKYSNEDTLSVALPYFWEHFDKDGWSLWYSEYRFPEELTQTFMSCNLITGMFQRLDKLRKNAFASVILFGTNNSSSISGVWVFRGQELAFPLSPDWQVDYESYTWRKLDPGSEETQTLVREYFSWEGAFQHVGKAFNQGKIFK</sequence>
<evidence type="ECO:0000250" key="1">
    <source>
        <dbReference type="UniProtKB" id="Q9D8N0"/>
    </source>
</evidence>
<evidence type="ECO:0000255" key="2">
    <source>
        <dbReference type="PROSITE-ProRule" id="PRU00519"/>
    </source>
</evidence>
<evidence type="ECO:0000256" key="3">
    <source>
        <dbReference type="SAM" id="MobiDB-lite"/>
    </source>
</evidence>
<evidence type="ECO:0000269" key="4">
    <source>
    </source>
</evidence>
<evidence type="ECO:0000269" key="5">
    <source>
    </source>
</evidence>
<evidence type="ECO:0000269" key="6">
    <source>
    </source>
</evidence>
<evidence type="ECO:0000269" key="7">
    <source ref="7"/>
</evidence>
<evidence type="ECO:0000303" key="8">
    <source>
    </source>
</evidence>
<evidence type="ECO:0000305" key="9"/>
<evidence type="ECO:0007744" key="10">
    <source>
    </source>
</evidence>
<evidence type="ECO:0007744" key="11">
    <source>
    </source>
</evidence>
<evidence type="ECO:0007744" key="12">
    <source>
    </source>
</evidence>
<evidence type="ECO:0007744" key="13">
    <source>
    </source>
</evidence>
<evidence type="ECO:0007744" key="14">
    <source>
    </source>
</evidence>
<evidence type="ECO:0007744" key="15">
    <source>
    </source>
</evidence>
<evidence type="ECO:0007829" key="16">
    <source>
        <dbReference type="PDB" id="1PBU"/>
    </source>
</evidence>
<evidence type="ECO:0007829" key="17">
    <source>
        <dbReference type="PDB" id="5JPO"/>
    </source>
</evidence>
<organism>
    <name type="scientific">Homo sapiens</name>
    <name type="common">Human</name>
    <dbReference type="NCBI Taxonomy" id="9606"/>
    <lineage>
        <taxon>Eukaryota</taxon>
        <taxon>Metazoa</taxon>
        <taxon>Chordata</taxon>
        <taxon>Craniata</taxon>
        <taxon>Vertebrata</taxon>
        <taxon>Euteleostomi</taxon>
        <taxon>Mammalia</taxon>
        <taxon>Eutheria</taxon>
        <taxon>Euarchontoglires</taxon>
        <taxon>Primates</taxon>
        <taxon>Haplorrhini</taxon>
        <taxon>Catarrhini</taxon>
        <taxon>Hominidae</taxon>
        <taxon>Homo</taxon>
    </lineage>
</organism>
<dbReference type="EMBL" id="X63526">
    <property type="protein sequence ID" value="CAA45089.1"/>
    <property type="molecule type" value="mRNA"/>
</dbReference>
<dbReference type="EMBL" id="Z11531">
    <property type="protein sequence ID" value="CAA77630.1"/>
    <property type="molecule type" value="mRNA"/>
</dbReference>
<dbReference type="EMBL" id="AK300203">
    <property type="protein sequence ID" value="BAG61974.1"/>
    <property type="molecule type" value="mRNA"/>
</dbReference>
<dbReference type="EMBL" id="AP001363">
    <property type="status" value="NOT_ANNOTATED_CDS"/>
    <property type="molecule type" value="Genomic_DNA"/>
</dbReference>
<dbReference type="EMBL" id="AP002990">
    <property type="status" value="NOT_ANNOTATED_CDS"/>
    <property type="molecule type" value="Genomic_DNA"/>
</dbReference>
<dbReference type="EMBL" id="BC000384">
    <property type="protein sequence ID" value="AAH00384.1"/>
    <property type="molecule type" value="mRNA"/>
</dbReference>
<dbReference type="EMBL" id="BC006509">
    <property type="protein sequence ID" value="AAH06509.1"/>
    <property type="molecule type" value="mRNA"/>
</dbReference>
<dbReference type="EMBL" id="BC006520">
    <property type="protein sequence ID" value="AAH06520.1"/>
    <property type="molecule type" value="mRNA"/>
</dbReference>
<dbReference type="EMBL" id="BC007949">
    <property type="protein sequence ID" value="AAH07949.2"/>
    <property type="molecule type" value="mRNA"/>
</dbReference>
<dbReference type="EMBL" id="BC009865">
    <property type="protein sequence ID" value="AAH09865.1"/>
    <property type="molecule type" value="mRNA"/>
</dbReference>
<dbReference type="EMBL" id="BC013918">
    <property type="protein sequence ID" value="AAH13918.1"/>
    <property type="molecule type" value="mRNA"/>
</dbReference>
<dbReference type="EMBL" id="BC015813">
    <property type="protein sequence ID" value="AAH15813.1"/>
    <property type="molecule type" value="mRNA"/>
</dbReference>
<dbReference type="EMBL" id="BC021974">
    <property type="protein sequence ID" value="AAH21974.2"/>
    <property type="molecule type" value="mRNA"/>
</dbReference>
<dbReference type="EMBL" id="BC028179">
    <property type="protein sequence ID" value="AAH28179.1"/>
    <property type="molecule type" value="mRNA"/>
</dbReference>
<dbReference type="EMBL" id="BC031012">
    <property type="protein sequence ID" value="AAH31012.1"/>
    <property type="molecule type" value="mRNA"/>
</dbReference>
<dbReference type="EMBL" id="BC067738">
    <property type="protein sequence ID" value="AAH67738.1"/>
    <property type="molecule type" value="mRNA"/>
</dbReference>
<dbReference type="EMBL" id="M55409">
    <property type="protein sequence ID" value="AAC18414.1"/>
    <property type="molecule type" value="mRNA"/>
</dbReference>
<dbReference type="EMBL" id="AF119850">
    <property type="protein sequence ID" value="AAF69604.1"/>
    <property type="molecule type" value="mRNA"/>
</dbReference>
<dbReference type="CCDS" id="CCDS44626.1">
    <molecule id="P26641-1"/>
</dbReference>
<dbReference type="PIR" id="S22655">
    <property type="entry name" value="S22655"/>
</dbReference>
<dbReference type="RefSeq" id="NP_001395.1">
    <molecule id="P26641-1"/>
    <property type="nucleotide sequence ID" value="NM_001404.5"/>
</dbReference>
<dbReference type="PDB" id="1PBU">
    <property type="method" value="NMR"/>
    <property type="chains" value="A=276-437"/>
</dbReference>
<dbReference type="PDB" id="5DQS">
    <property type="method" value="X-ray"/>
    <property type="resolution" value="2.10 A"/>
    <property type="chains" value="A=2-218"/>
</dbReference>
<dbReference type="PDB" id="5JPO">
    <property type="method" value="X-ray"/>
    <property type="resolution" value="2.00 A"/>
    <property type="chains" value="A/B/C/D=1-218"/>
</dbReference>
<dbReference type="PDBsum" id="1PBU"/>
<dbReference type="PDBsum" id="5DQS"/>
<dbReference type="PDBsum" id="5JPO"/>
<dbReference type="BMRB" id="P26641"/>
<dbReference type="SMR" id="P26641"/>
<dbReference type="BioGRID" id="108257">
    <property type="interactions" value="476"/>
</dbReference>
<dbReference type="CORUM" id="P26641"/>
<dbReference type="DIP" id="DIP-32516N"/>
<dbReference type="FunCoup" id="P26641">
    <property type="interactions" value="2897"/>
</dbReference>
<dbReference type="IntAct" id="P26641">
    <property type="interactions" value="254"/>
</dbReference>
<dbReference type="MINT" id="P26641"/>
<dbReference type="STRING" id="9606.ENSP00000331901"/>
<dbReference type="ChEMBL" id="CHEMBL4295735"/>
<dbReference type="GlyGen" id="P26641">
    <property type="glycosylation" value="2 sites, 1 N-linked glycan (1 site), 1 O-linked glycan (1 site)"/>
</dbReference>
<dbReference type="iPTMnet" id="P26641"/>
<dbReference type="MetOSite" id="P26641"/>
<dbReference type="PhosphoSitePlus" id="P26641"/>
<dbReference type="SwissPalm" id="P26641"/>
<dbReference type="BioMuta" id="EEF1G"/>
<dbReference type="DMDM" id="119165"/>
<dbReference type="OGP" id="P26641"/>
<dbReference type="jPOST" id="P26641"/>
<dbReference type="MassIVE" id="P26641"/>
<dbReference type="PaxDb" id="9606-ENSP00000331901"/>
<dbReference type="PeptideAtlas" id="P26641"/>
<dbReference type="ProteomicsDB" id="5107"/>
<dbReference type="ProteomicsDB" id="54359">
    <molecule id="P26641-1"/>
</dbReference>
<dbReference type="Pumba" id="P26641"/>
<dbReference type="TopDownProteomics" id="P26641-1">
    <molecule id="P26641-1"/>
</dbReference>
<dbReference type="Antibodypedia" id="52234">
    <property type="antibodies" value="381 antibodies from 30 providers"/>
</dbReference>
<dbReference type="DNASU" id="1937"/>
<dbReference type="Ensembl" id="ENST00000329251.5">
    <molecule id="P26641-1"/>
    <property type="protein sequence ID" value="ENSP00000331901.4"/>
    <property type="gene ID" value="ENSG00000254772.10"/>
</dbReference>
<dbReference type="GeneID" id="1937"/>
<dbReference type="KEGG" id="hsa:1937"/>
<dbReference type="MANE-Select" id="ENST00000329251.5">
    <property type="protein sequence ID" value="ENSP00000331901.4"/>
    <property type="RefSeq nucleotide sequence ID" value="NM_001404.5"/>
    <property type="RefSeq protein sequence ID" value="NP_001395.1"/>
</dbReference>
<dbReference type="AGR" id="HGNC:3213"/>
<dbReference type="CTD" id="1937"/>
<dbReference type="DisGeNET" id="1937"/>
<dbReference type="GeneCards" id="EEF1G"/>
<dbReference type="HGNC" id="HGNC:3213">
    <property type="gene designation" value="EEF1G"/>
</dbReference>
<dbReference type="HPA" id="ENSG00000254772">
    <property type="expression patterns" value="Low tissue specificity"/>
</dbReference>
<dbReference type="MIM" id="130593">
    <property type="type" value="gene"/>
</dbReference>
<dbReference type="neXtProt" id="NX_P26641"/>
<dbReference type="OpenTargets" id="ENSG00000254772"/>
<dbReference type="PharmGKB" id="PA27649"/>
<dbReference type="VEuPathDB" id="HostDB:ENSG00000254772"/>
<dbReference type="eggNOG" id="KOG0867">
    <property type="taxonomic scope" value="Eukaryota"/>
</dbReference>
<dbReference type="eggNOG" id="KOG1627">
    <property type="taxonomic scope" value="Eukaryota"/>
</dbReference>
<dbReference type="GeneTree" id="ENSGT00390000007552"/>
<dbReference type="HOGENOM" id="CLU_011226_3_1_1"/>
<dbReference type="InParanoid" id="P26641"/>
<dbReference type="OMA" id="TQYFSWT"/>
<dbReference type="OrthoDB" id="9514296at2759"/>
<dbReference type="PAN-GO" id="P26641">
    <property type="GO annotations" value="3 GO annotations based on evolutionary models"/>
</dbReference>
<dbReference type="PhylomeDB" id="P26641"/>
<dbReference type="TreeFam" id="TF314343"/>
<dbReference type="PathwayCommons" id="P26641"/>
<dbReference type="Reactome" id="R-HSA-156842">
    <property type="pathway name" value="Eukaryotic Translation Elongation"/>
</dbReference>
<dbReference type="Reactome" id="R-HSA-9725370">
    <property type="pathway name" value="Signaling by ALK fusions and activated point mutants"/>
</dbReference>
<dbReference type="SignaLink" id="P26641"/>
<dbReference type="SIGNOR" id="P26641"/>
<dbReference type="BioGRID-ORCS" id="1937">
    <property type="hits" value="597 hits in 1164 CRISPR screens"/>
</dbReference>
<dbReference type="CD-CODE" id="91857CE7">
    <property type="entry name" value="Nucleolus"/>
</dbReference>
<dbReference type="CD-CODE" id="DEE660B4">
    <property type="entry name" value="Stress granule"/>
</dbReference>
<dbReference type="ChiTaRS" id="EEF1G">
    <property type="organism name" value="human"/>
</dbReference>
<dbReference type="EvolutionaryTrace" id="P26641"/>
<dbReference type="GeneWiki" id="EEF1G"/>
<dbReference type="GenomeRNAi" id="1937"/>
<dbReference type="Pharos" id="P26641">
    <property type="development level" value="Tbio"/>
</dbReference>
<dbReference type="PRO" id="PR:P26641"/>
<dbReference type="Proteomes" id="UP000005640">
    <property type="component" value="Chromosome 11"/>
</dbReference>
<dbReference type="RNAct" id="P26641">
    <property type="molecule type" value="protein"/>
</dbReference>
<dbReference type="Bgee" id="ENSG00000254772">
    <property type="expression patterns" value="Expressed in cortical plate and 103 other cell types or tissues"/>
</dbReference>
<dbReference type="ExpressionAtlas" id="P26641">
    <property type="expression patterns" value="baseline and differential"/>
</dbReference>
<dbReference type="GO" id="GO:0005737">
    <property type="term" value="C:cytoplasm"/>
    <property type="evidence" value="ECO:0000314"/>
    <property type="project" value="UniProtKB"/>
</dbReference>
<dbReference type="GO" id="GO:0005829">
    <property type="term" value="C:cytosol"/>
    <property type="evidence" value="ECO:0000304"/>
    <property type="project" value="Reactome"/>
</dbReference>
<dbReference type="GO" id="GO:0070062">
    <property type="term" value="C:extracellular exosome"/>
    <property type="evidence" value="ECO:0007005"/>
    <property type="project" value="UniProtKB"/>
</dbReference>
<dbReference type="GO" id="GO:0016020">
    <property type="term" value="C:membrane"/>
    <property type="evidence" value="ECO:0007005"/>
    <property type="project" value="UniProtKB"/>
</dbReference>
<dbReference type="GO" id="GO:0005634">
    <property type="term" value="C:nucleus"/>
    <property type="evidence" value="ECO:0007005"/>
    <property type="project" value="UniProtKB"/>
</dbReference>
<dbReference type="GO" id="GO:0045296">
    <property type="term" value="F:cadherin binding"/>
    <property type="evidence" value="ECO:0007005"/>
    <property type="project" value="BHF-UCL"/>
</dbReference>
<dbReference type="GO" id="GO:0003746">
    <property type="term" value="F:translation elongation factor activity"/>
    <property type="evidence" value="ECO:0007669"/>
    <property type="project" value="UniProtKB-KW"/>
</dbReference>
<dbReference type="GO" id="GO:0009615">
    <property type="term" value="P:response to virus"/>
    <property type="evidence" value="ECO:0000270"/>
    <property type="project" value="UniProtKB"/>
</dbReference>
<dbReference type="GO" id="GO:0006414">
    <property type="term" value="P:translational elongation"/>
    <property type="evidence" value="ECO:0000318"/>
    <property type="project" value="GO_Central"/>
</dbReference>
<dbReference type="CDD" id="cd03181">
    <property type="entry name" value="GST_C_EF1Bgamma_like"/>
    <property type="match status" value="1"/>
</dbReference>
<dbReference type="CDD" id="cd03044">
    <property type="entry name" value="GST_N_EF1Bgamma"/>
    <property type="match status" value="1"/>
</dbReference>
<dbReference type="FunFam" id="1.20.1050.10:FF:000021">
    <property type="entry name" value="Elongation factor 1-gamma"/>
    <property type="match status" value="1"/>
</dbReference>
<dbReference type="FunFam" id="3.40.30.10:FF:000088">
    <property type="entry name" value="Elongation factor 1-gamma"/>
    <property type="match status" value="1"/>
</dbReference>
<dbReference type="FunFam" id="3.30.70.1010:FF:000001">
    <property type="entry name" value="Elongation factor 1-gamma 1"/>
    <property type="match status" value="1"/>
</dbReference>
<dbReference type="Gene3D" id="1.20.1050.10">
    <property type="match status" value="1"/>
</dbReference>
<dbReference type="Gene3D" id="3.40.30.10">
    <property type="entry name" value="Glutaredoxin"/>
    <property type="match status" value="1"/>
</dbReference>
<dbReference type="Gene3D" id="3.30.70.1010">
    <property type="entry name" value="Translation elongation factor EF1B, gamma chain, conserved domain"/>
    <property type="match status" value="1"/>
</dbReference>
<dbReference type="InterPro" id="IPR050802">
    <property type="entry name" value="EF-GSTs"/>
</dbReference>
<dbReference type="InterPro" id="IPR001662">
    <property type="entry name" value="EF1B_G_C"/>
</dbReference>
<dbReference type="InterPro" id="IPR036433">
    <property type="entry name" value="EF1B_G_C_sf"/>
</dbReference>
<dbReference type="InterPro" id="IPR010987">
    <property type="entry name" value="Glutathione-S-Trfase_C-like"/>
</dbReference>
<dbReference type="InterPro" id="IPR036282">
    <property type="entry name" value="Glutathione-S-Trfase_C_sf"/>
</dbReference>
<dbReference type="InterPro" id="IPR040079">
    <property type="entry name" value="Glutathione_S-Trfase"/>
</dbReference>
<dbReference type="InterPro" id="IPR004045">
    <property type="entry name" value="Glutathione_S-Trfase_N"/>
</dbReference>
<dbReference type="InterPro" id="IPR004046">
    <property type="entry name" value="GST_C"/>
</dbReference>
<dbReference type="InterPro" id="IPR036249">
    <property type="entry name" value="Thioredoxin-like_sf"/>
</dbReference>
<dbReference type="PANTHER" id="PTHR43986">
    <property type="entry name" value="ELONGATION FACTOR 1-GAMMA"/>
    <property type="match status" value="1"/>
</dbReference>
<dbReference type="PANTHER" id="PTHR43986:SF1">
    <property type="entry name" value="ELONGATION FACTOR 1-GAMMA"/>
    <property type="match status" value="1"/>
</dbReference>
<dbReference type="Pfam" id="PF00647">
    <property type="entry name" value="EF1G"/>
    <property type="match status" value="1"/>
</dbReference>
<dbReference type="Pfam" id="PF00043">
    <property type="entry name" value="GST_C"/>
    <property type="match status" value="1"/>
</dbReference>
<dbReference type="Pfam" id="PF02798">
    <property type="entry name" value="GST_N"/>
    <property type="match status" value="1"/>
</dbReference>
<dbReference type="SFLD" id="SFLDS00019">
    <property type="entry name" value="Glutathione_Transferase_(cytos"/>
    <property type="match status" value="1"/>
</dbReference>
<dbReference type="SFLD" id="SFLDG00358">
    <property type="entry name" value="Main_(cytGST)"/>
    <property type="match status" value="1"/>
</dbReference>
<dbReference type="SMART" id="SM01183">
    <property type="entry name" value="EF1G"/>
    <property type="match status" value="1"/>
</dbReference>
<dbReference type="SUPFAM" id="SSF89942">
    <property type="entry name" value="eEF1-gamma domain"/>
    <property type="match status" value="1"/>
</dbReference>
<dbReference type="SUPFAM" id="SSF47616">
    <property type="entry name" value="GST C-terminal domain-like"/>
    <property type="match status" value="1"/>
</dbReference>
<dbReference type="SUPFAM" id="SSF52833">
    <property type="entry name" value="Thioredoxin-like"/>
    <property type="match status" value="1"/>
</dbReference>
<dbReference type="PROSITE" id="PS50040">
    <property type="entry name" value="EF1G_C"/>
    <property type="match status" value="1"/>
</dbReference>
<dbReference type="PROSITE" id="PS50405">
    <property type="entry name" value="GST_CTER"/>
    <property type="match status" value="1"/>
</dbReference>
<dbReference type="PROSITE" id="PS50404">
    <property type="entry name" value="GST_NTER"/>
    <property type="match status" value="1"/>
</dbReference>
<gene>
    <name type="primary">EEF1G</name>
    <name type="synonym">EF1G</name>
    <name type="ORF">PRO1608</name>
</gene>
<protein>
    <recommendedName>
        <fullName>Elongation factor 1-gamma</fullName>
        <shortName>EF-1-gamma</shortName>
    </recommendedName>
    <alternativeName>
        <fullName>eEF-1B gamma</fullName>
    </alternativeName>
</protein>
<accession>P26641</accession>
<accession>B4DTG2</accession>
<accession>Q6PJ62</accession>
<accession>Q6PK31</accession>
<accession>Q96CU2</accession>
<accession>Q9P196</accession>
<proteinExistence type="evidence at protein level"/>
<comment type="function">
    <text>Probably plays a role in anchoring the complex to other cellular components.</text>
</comment>
<comment type="subunit">
    <text>EF-1 is composed of four subunits: alpha, beta, delta, and gamma.</text>
</comment>
<comment type="interaction">
    <interactant intactId="EBI-351467">
        <id>P26641</id>
    </interactant>
    <interactant intactId="EBI-2837444">
        <id>Q8WUW1</id>
        <label>BRK1</label>
    </interactant>
    <organismsDiffer>false</organismsDiffer>
    <experiments>3</experiments>
</comment>
<comment type="interaction">
    <interactant intactId="EBI-351467">
        <id>P26641</id>
    </interactant>
    <interactant intactId="EBI-354334">
        <id>P24534</id>
        <label>EEF1B2</label>
    </interactant>
    <organismsDiffer>false</organismsDiffer>
    <experiments>12</experiments>
</comment>
<comment type="interaction">
    <interactant intactId="EBI-351467">
        <id>P26641</id>
    </interactant>
    <interactant intactId="EBI-358607">
        <id>P29692</id>
        <label>EEF1D</label>
    </interactant>
    <organismsDiffer>false</organismsDiffer>
    <experiments>8</experiments>
</comment>
<comment type="interaction">
    <interactant intactId="EBI-351467">
        <id>P26641</id>
    </interactant>
    <interactant intactId="EBI-5280572">
        <id>P29692-2</id>
        <label>EEF1D</label>
    </interactant>
    <organismsDiffer>false</organismsDiffer>
    <experiments>4</experiments>
</comment>
<comment type="interaction">
    <interactant intactId="EBI-351467">
        <id>P26641</id>
    </interactant>
    <interactant intactId="EBI-297873">
        <id>Q04695</id>
        <label>KRT17</label>
    </interactant>
    <organismsDiffer>false</organismsDiffer>
    <experiments>2</experiments>
</comment>
<comment type="interaction">
    <interactant intactId="EBI-351467">
        <id>P26641</id>
    </interactant>
    <interactant intactId="EBI-709754">
        <id>Q9HB07</id>
        <label>MYG1</label>
    </interactant>
    <organismsDiffer>false</organismsDiffer>
    <experiments>3</experiments>
</comment>
<comment type="interaction">
    <interactant intactId="EBI-351467">
        <id>P26641</id>
    </interactant>
    <interactant intactId="EBI-602382">
        <id>Q16512</id>
        <label>PKN1</label>
    </interactant>
    <organismsDiffer>false</organismsDiffer>
    <experiments>3</experiments>
</comment>
<comment type="interaction">
    <interactant intactId="EBI-351467">
        <id>P26641</id>
    </interactant>
    <interactant intactId="EBI-5661333">
        <id>Q969Q1</id>
        <label>TRIM63</label>
    </interactant>
    <organismsDiffer>false</organismsDiffer>
    <experiments>2</experiments>
</comment>
<comment type="interaction">
    <interactant intactId="EBI-351467">
        <id>P26641</id>
    </interactant>
    <interactant intactId="EBI-25894402">
        <id>P14679-2</id>
        <label>TYR</label>
    </interactant>
    <organismsDiffer>false</organismsDiffer>
    <experiments>3</experiments>
</comment>
<comment type="interaction">
    <interactant intactId="EBI-351467">
        <id>P26641</id>
    </interactant>
    <interactant intactId="EBI-1052596">
        <id>P31930</id>
        <label>UQCRC1</label>
    </interactant>
    <organismsDiffer>false</organismsDiffer>
    <experiments>3</experiments>
</comment>
<comment type="interaction">
    <interactant intactId="EBI-10177695">
        <id>P26641-2</id>
    </interactant>
    <interactant intactId="EBI-354334">
        <id>P24534</id>
        <label>EEF1B2</label>
    </interactant>
    <organismsDiffer>false</organismsDiffer>
    <experiments>3</experiments>
</comment>
<comment type="interaction">
    <interactant intactId="EBI-10177695">
        <id>P26641-2</id>
    </interactant>
    <interactant intactId="EBI-358607">
        <id>P29692</id>
        <label>EEF1D</label>
    </interactant>
    <organismsDiffer>false</organismsDiffer>
    <experiments>3</experiments>
</comment>
<comment type="interaction">
    <interactant intactId="EBI-10177695">
        <id>P26641-2</id>
    </interactant>
    <interactant intactId="EBI-5280572">
        <id>P29692-2</id>
        <label>EEF1D</label>
    </interactant>
    <organismsDiffer>false</organismsDiffer>
    <experiments>3</experiments>
</comment>
<comment type="interaction">
    <interactant intactId="EBI-10177695">
        <id>P26641-2</id>
    </interactant>
    <interactant intactId="EBI-10248874">
        <id>Q658K8</id>
        <label>EEF1DP3</label>
    </interactant>
    <organismsDiffer>false</organismsDiffer>
    <experiments>4</experiments>
</comment>
<comment type="interaction">
    <interactant intactId="EBI-10177695">
        <id>P26641-2</id>
    </interactant>
    <interactant intactId="EBI-2510096">
        <id>O94889</id>
        <label>KLHL18</label>
    </interactant>
    <organismsDiffer>false</organismsDiffer>
    <experiments>3</experiments>
</comment>
<comment type="interaction">
    <interactant intactId="EBI-10177695">
        <id>P26641-2</id>
    </interactant>
    <interactant intactId="EBI-714824">
        <id>Q9HBL7</id>
        <label>PLGRKT</label>
    </interactant>
    <organismsDiffer>false</organismsDiffer>
    <experiments>3</experiments>
</comment>
<comment type="interaction">
    <interactant intactId="EBI-10177695">
        <id>P26641-2</id>
    </interactant>
    <interactant intactId="EBI-2692323">
        <id>P78332</id>
        <label>RBM6</label>
    </interactant>
    <organismsDiffer>false</organismsDiffer>
    <experiments>3</experiments>
</comment>
<comment type="interaction">
    <interactant intactId="EBI-10177695">
        <id>P26641-2</id>
    </interactant>
    <interactant intactId="EBI-10177680">
        <id>F4ZW62</id>
    </interactant>
    <organismsDiffer>false</organismsDiffer>
    <experiments>3</experiments>
</comment>
<comment type="alternative products">
    <event type="alternative splicing"/>
    <isoform>
        <id>P26641-1</id>
        <name>1</name>
        <sequence type="displayed"/>
    </isoform>
    <isoform>
        <id>P26641-2</id>
        <name>2</name>
        <sequence type="described" ref="VSP_056204"/>
    </isoform>
</comment>
<comment type="tissue specificity">
    <text>Highly expressed in pancreatic tumor tissue and to a lesser extent in normal kidney, intestine, pancreas, stomach, lung, brain, spleen and liver.</text>
</comment>
<comment type="induction">
    <text evidence="5">Down-regulated in response to enterovirus 71 (EV71) infection.</text>
</comment>